<gene>
    <name type="ordered locus">TP_0503</name>
</gene>
<evidence type="ECO:0000255" key="1">
    <source>
        <dbReference type="PROSITE-ProRule" id="PRU00303"/>
    </source>
</evidence>
<accession>O83516</accession>
<protein>
    <recommendedName>
        <fullName>Uncharacterized lipoprotein TP_0503</fullName>
    </recommendedName>
</protein>
<feature type="signal peptide" evidence="1">
    <location>
        <begin position="1"/>
        <end position="17"/>
    </location>
</feature>
<feature type="chain" id="PRO_0000014252" description="Uncharacterized lipoprotein TP_0503">
    <location>
        <begin position="18"/>
        <end position="187"/>
    </location>
</feature>
<feature type="lipid moiety-binding region" description="N-palmitoyl cysteine" evidence="1">
    <location>
        <position position="18"/>
    </location>
</feature>
<feature type="lipid moiety-binding region" description="S-diacylglycerol cysteine" evidence="1">
    <location>
        <position position="18"/>
    </location>
</feature>
<organism>
    <name type="scientific">Treponema pallidum (strain Nichols)</name>
    <dbReference type="NCBI Taxonomy" id="243276"/>
    <lineage>
        <taxon>Bacteria</taxon>
        <taxon>Pseudomonadati</taxon>
        <taxon>Spirochaetota</taxon>
        <taxon>Spirochaetia</taxon>
        <taxon>Spirochaetales</taxon>
        <taxon>Treponemataceae</taxon>
        <taxon>Treponema</taxon>
    </lineage>
</organism>
<sequence>MYAGGRVVRSAFARGKVCYLIGSVLWGSVSCTQPRVQKWVQNDGKVNVHSPQERAGVVATFGTVRITRSDYERTKAELQDVVAHLNRITAERDYHKWLVYLSDAYRRAYSMPDILQQSSDALPKKGVRLRHLRDYFIHVFVPSRQNVRVDSIVFESPTRVDVIMNHGGKALLVYKIEKIHSAWKLLP</sequence>
<proteinExistence type="inferred from homology"/>
<dbReference type="EMBL" id="AE000520">
    <property type="protein sequence ID" value="AAC65492.1"/>
    <property type="molecule type" value="Genomic_DNA"/>
</dbReference>
<dbReference type="PIR" id="C71317">
    <property type="entry name" value="C71317"/>
</dbReference>
<dbReference type="RefSeq" id="WP_010881952.1">
    <property type="nucleotide sequence ID" value="NC_021490.2"/>
</dbReference>
<dbReference type="IntAct" id="O83516">
    <property type="interactions" value="23"/>
</dbReference>
<dbReference type="STRING" id="243276.TP_0503"/>
<dbReference type="EnsemblBacteria" id="AAC65492">
    <property type="protein sequence ID" value="AAC65492"/>
    <property type="gene ID" value="TP_0503"/>
</dbReference>
<dbReference type="KEGG" id="tpa:TP_0503"/>
<dbReference type="KEGG" id="tpw:TPANIC_0503"/>
<dbReference type="eggNOG" id="ENOG503450S">
    <property type="taxonomic scope" value="Bacteria"/>
</dbReference>
<dbReference type="HOGENOM" id="CLU_118622_1_0_12"/>
<dbReference type="OrthoDB" id="359246at2"/>
<dbReference type="Proteomes" id="UP000000811">
    <property type="component" value="Chromosome"/>
</dbReference>
<dbReference type="GO" id="GO:0005886">
    <property type="term" value="C:plasma membrane"/>
    <property type="evidence" value="ECO:0007669"/>
    <property type="project" value="UniProtKB-SubCell"/>
</dbReference>
<dbReference type="PROSITE" id="PS51257">
    <property type="entry name" value="PROKAR_LIPOPROTEIN"/>
    <property type="match status" value="1"/>
</dbReference>
<keyword id="KW-1003">Cell membrane</keyword>
<keyword id="KW-0449">Lipoprotein</keyword>
<keyword id="KW-0472">Membrane</keyword>
<keyword id="KW-0564">Palmitate</keyword>
<keyword id="KW-1185">Reference proteome</keyword>
<keyword id="KW-0732">Signal</keyword>
<comment type="subcellular location">
    <subcellularLocation>
        <location evidence="1">Cell membrane</location>
        <topology evidence="1">Lipid-anchor</topology>
    </subcellularLocation>
</comment>
<reference key="1">
    <citation type="journal article" date="1998" name="Science">
        <title>Complete genome sequence of Treponema pallidum, the syphilis spirochete.</title>
        <authorList>
            <person name="Fraser C.M."/>
            <person name="Norris S.J."/>
            <person name="Weinstock G.M."/>
            <person name="White O."/>
            <person name="Sutton G.G."/>
            <person name="Dodson R.J."/>
            <person name="Gwinn M.L."/>
            <person name="Hickey E.K."/>
            <person name="Clayton R.A."/>
            <person name="Ketchum K.A."/>
            <person name="Sodergren E."/>
            <person name="Hardham J.M."/>
            <person name="McLeod M.P."/>
            <person name="Salzberg S.L."/>
            <person name="Peterson J.D."/>
            <person name="Khalak H.G."/>
            <person name="Richardson D.L."/>
            <person name="Howell J.K."/>
            <person name="Chidambaram M."/>
            <person name="Utterback T.R."/>
            <person name="McDonald L.A."/>
            <person name="Artiach P."/>
            <person name="Bowman C."/>
            <person name="Cotton M.D."/>
            <person name="Fujii C."/>
            <person name="Garland S.A."/>
            <person name="Hatch B."/>
            <person name="Horst K."/>
            <person name="Roberts K.M."/>
            <person name="Sandusky M."/>
            <person name="Weidman J.F."/>
            <person name="Smith H.O."/>
            <person name="Venter J.C."/>
        </authorList>
    </citation>
    <scope>NUCLEOTIDE SEQUENCE [LARGE SCALE GENOMIC DNA]</scope>
    <source>
        <strain>Nichols</strain>
    </source>
</reference>
<name>Y503_TREPA</name>